<reference key="1">
    <citation type="journal article" date="2008" name="Proc. Natl. Acad. Sci. U.S.A.">
        <title>Niche adaptation and genome expansion in the chlorophyll d-producing cyanobacterium Acaryochloris marina.</title>
        <authorList>
            <person name="Swingley W.D."/>
            <person name="Chen M."/>
            <person name="Cheung P.C."/>
            <person name="Conrad A.L."/>
            <person name="Dejesa L.C."/>
            <person name="Hao J."/>
            <person name="Honchak B.M."/>
            <person name="Karbach L.E."/>
            <person name="Kurdoglu A."/>
            <person name="Lahiri S."/>
            <person name="Mastrian S.D."/>
            <person name="Miyashita H."/>
            <person name="Page L."/>
            <person name="Ramakrishna P."/>
            <person name="Satoh S."/>
            <person name="Sattley W.M."/>
            <person name="Shimada Y."/>
            <person name="Taylor H.L."/>
            <person name="Tomo T."/>
            <person name="Tsuchiya T."/>
            <person name="Wang Z.T."/>
            <person name="Raymond J."/>
            <person name="Mimuro M."/>
            <person name="Blankenship R.E."/>
            <person name="Touchman J.W."/>
        </authorList>
    </citation>
    <scope>NUCLEOTIDE SEQUENCE [LARGE SCALE GENOMIC DNA]</scope>
    <source>
        <strain>MBIC 11017</strain>
    </source>
</reference>
<gene>
    <name evidence="1" type="primary">hisA</name>
    <name type="ordered locus">AM1_1514</name>
</gene>
<dbReference type="EC" id="5.3.1.16" evidence="1"/>
<dbReference type="EMBL" id="CP000828">
    <property type="protein sequence ID" value="ABW26539.1"/>
    <property type="molecule type" value="Genomic_DNA"/>
</dbReference>
<dbReference type="RefSeq" id="WP_012162064.1">
    <property type="nucleotide sequence ID" value="NC_009925.1"/>
</dbReference>
<dbReference type="SMR" id="B0C904"/>
<dbReference type="STRING" id="329726.AM1_1514"/>
<dbReference type="KEGG" id="amr:AM1_1514"/>
<dbReference type="eggNOG" id="COG0106">
    <property type="taxonomic scope" value="Bacteria"/>
</dbReference>
<dbReference type="HOGENOM" id="CLU_048577_1_1_3"/>
<dbReference type="OrthoDB" id="9807749at2"/>
<dbReference type="UniPathway" id="UPA00031">
    <property type="reaction ID" value="UER00009"/>
</dbReference>
<dbReference type="Proteomes" id="UP000000268">
    <property type="component" value="Chromosome"/>
</dbReference>
<dbReference type="GO" id="GO:0005737">
    <property type="term" value="C:cytoplasm"/>
    <property type="evidence" value="ECO:0007669"/>
    <property type="project" value="UniProtKB-SubCell"/>
</dbReference>
<dbReference type="GO" id="GO:0003949">
    <property type="term" value="F:1-(5-phosphoribosyl)-5-[(5-phosphoribosylamino)methylideneamino]imidazole-4-carboxamide isomerase activity"/>
    <property type="evidence" value="ECO:0007669"/>
    <property type="project" value="UniProtKB-UniRule"/>
</dbReference>
<dbReference type="GO" id="GO:0000105">
    <property type="term" value="P:L-histidine biosynthetic process"/>
    <property type="evidence" value="ECO:0007669"/>
    <property type="project" value="UniProtKB-UniRule"/>
</dbReference>
<dbReference type="GO" id="GO:0000162">
    <property type="term" value="P:L-tryptophan biosynthetic process"/>
    <property type="evidence" value="ECO:0007669"/>
    <property type="project" value="TreeGrafter"/>
</dbReference>
<dbReference type="CDD" id="cd04732">
    <property type="entry name" value="HisA"/>
    <property type="match status" value="1"/>
</dbReference>
<dbReference type="FunFam" id="3.20.20.70:FF:000009">
    <property type="entry name" value="1-(5-phosphoribosyl)-5-[(5-phosphoribosylamino)methylideneamino] imidazole-4-carboxamide isomerase"/>
    <property type="match status" value="1"/>
</dbReference>
<dbReference type="Gene3D" id="3.20.20.70">
    <property type="entry name" value="Aldolase class I"/>
    <property type="match status" value="1"/>
</dbReference>
<dbReference type="HAMAP" id="MF_01014">
    <property type="entry name" value="HisA"/>
    <property type="match status" value="1"/>
</dbReference>
<dbReference type="InterPro" id="IPR013785">
    <property type="entry name" value="Aldolase_TIM"/>
</dbReference>
<dbReference type="InterPro" id="IPR006062">
    <property type="entry name" value="His_biosynth"/>
</dbReference>
<dbReference type="InterPro" id="IPR006063">
    <property type="entry name" value="HisA_bact_arch"/>
</dbReference>
<dbReference type="InterPro" id="IPR044524">
    <property type="entry name" value="Isoase_HisA-like"/>
</dbReference>
<dbReference type="InterPro" id="IPR023016">
    <property type="entry name" value="Isoase_HisA-like_bact"/>
</dbReference>
<dbReference type="InterPro" id="IPR011060">
    <property type="entry name" value="RibuloseP-bd_barrel"/>
</dbReference>
<dbReference type="NCBIfam" id="TIGR00007">
    <property type="entry name" value="1-(5-phosphoribosyl)-5-[(5-phosphoribosylamino)methylideneamino]imidazole-4-carboxamide isomerase"/>
    <property type="match status" value="1"/>
</dbReference>
<dbReference type="NCBIfam" id="NF010112">
    <property type="entry name" value="PRK13585.1"/>
    <property type="match status" value="1"/>
</dbReference>
<dbReference type="PANTHER" id="PTHR43090">
    <property type="entry name" value="1-(5-PHOSPHORIBOSYL)-5-[(5-PHOSPHORIBOSYLAMINO)METHYLIDENEAMINO] IMIDAZOLE-4-CARBOXAMIDE ISOMERASE"/>
    <property type="match status" value="1"/>
</dbReference>
<dbReference type="PANTHER" id="PTHR43090:SF2">
    <property type="entry name" value="1-(5-PHOSPHORIBOSYL)-5-[(5-PHOSPHORIBOSYLAMINO)METHYLIDENEAMINO] IMIDAZOLE-4-CARBOXAMIDE ISOMERASE"/>
    <property type="match status" value="1"/>
</dbReference>
<dbReference type="Pfam" id="PF00977">
    <property type="entry name" value="His_biosynth"/>
    <property type="match status" value="1"/>
</dbReference>
<dbReference type="SUPFAM" id="SSF51366">
    <property type="entry name" value="Ribulose-phoshate binding barrel"/>
    <property type="match status" value="1"/>
</dbReference>
<name>HIS4_ACAM1</name>
<sequence>MDVIPAIDLLEGRCVRLYQGDYDQSQVFSENPVEVAKAWEAQGAQWLHLVDLDGAKTGQPVNLDTIAAVVEALEIPVQVGGGLRDRNRVTQLLNLGVRRGILGTVAIENPDLVQELCQEFPDQIVVGIDAREGRVATRGWLETSEILAVDLAKRMVTAGAAAIIYTDIQRDGTLQGPNIPMLREMAEAITIPVIASGGVSSITDLLNLLALEAIGVTGAIVGKALYTEDIALSEALRAVGPGRWQDVPPDLGSSALA</sequence>
<comment type="catalytic activity">
    <reaction evidence="1">
        <text>1-(5-phospho-beta-D-ribosyl)-5-[(5-phospho-beta-D-ribosylamino)methylideneamino]imidazole-4-carboxamide = 5-[(5-phospho-1-deoxy-D-ribulos-1-ylimino)methylamino]-1-(5-phospho-beta-D-ribosyl)imidazole-4-carboxamide</text>
        <dbReference type="Rhea" id="RHEA:15469"/>
        <dbReference type="ChEBI" id="CHEBI:58435"/>
        <dbReference type="ChEBI" id="CHEBI:58525"/>
        <dbReference type="EC" id="5.3.1.16"/>
    </reaction>
</comment>
<comment type="pathway">
    <text evidence="1">Amino-acid biosynthesis; L-histidine biosynthesis; L-histidine from 5-phospho-alpha-D-ribose 1-diphosphate: step 4/9.</text>
</comment>
<comment type="subcellular location">
    <subcellularLocation>
        <location evidence="1">Cytoplasm</location>
    </subcellularLocation>
</comment>
<comment type="similarity">
    <text evidence="1">Belongs to the HisA/HisF family.</text>
</comment>
<organism>
    <name type="scientific">Acaryochloris marina (strain MBIC 11017)</name>
    <dbReference type="NCBI Taxonomy" id="329726"/>
    <lineage>
        <taxon>Bacteria</taxon>
        <taxon>Bacillati</taxon>
        <taxon>Cyanobacteriota</taxon>
        <taxon>Cyanophyceae</taxon>
        <taxon>Acaryochloridales</taxon>
        <taxon>Acaryochloridaceae</taxon>
        <taxon>Acaryochloris</taxon>
    </lineage>
</organism>
<evidence type="ECO:0000255" key="1">
    <source>
        <dbReference type="HAMAP-Rule" id="MF_01014"/>
    </source>
</evidence>
<protein>
    <recommendedName>
        <fullName evidence="1">1-(5-phosphoribosyl)-5-[(5-phosphoribosylamino)methylideneamino] imidazole-4-carboxamide isomerase</fullName>
        <ecNumber evidence="1">5.3.1.16</ecNumber>
    </recommendedName>
    <alternativeName>
        <fullName evidence="1">Phosphoribosylformimino-5-aminoimidazole carboxamide ribotide isomerase</fullName>
    </alternativeName>
</protein>
<keyword id="KW-0028">Amino-acid biosynthesis</keyword>
<keyword id="KW-0963">Cytoplasm</keyword>
<keyword id="KW-0368">Histidine biosynthesis</keyword>
<keyword id="KW-0413">Isomerase</keyword>
<keyword id="KW-1185">Reference proteome</keyword>
<accession>B0C904</accession>
<feature type="chain" id="PRO_1000084087" description="1-(5-phosphoribosyl)-5-[(5-phosphoribosylamino)methylideneamino] imidazole-4-carboxamide isomerase">
    <location>
        <begin position="1"/>
        <end position="257"/>
    </location>
</feature>
<feature type="active site" description="Proton acceptor" evidence="1">
    <location>
        <position position="8"/>
    </location>
</feature>
<feature type="active site" description="Proton donor" evidence="1">
    <location>
        <position position="129"/>
    </location>
</feature>
<proteinExistence type="inferred from homology"/>